<sequence>MSNNNNSPTTVNQETTTSREVSITLPTDQSPQTSPGSSSSPSPRPSGGSPARRTATGLSGKHSIFRGIRLRNGKWVSEIREPRKTTRIWLGTYPVPEMAAAAYDVAALALKGPDAVLNFPGLALTYVAPVSNSAADIRAAASRAAEMKQPDQGGDEKVLEPVQPGKEEELEEVSCNSCSLEFMDEEAMLNMPTLLTEMAEGMLMSPPRMMIHPTMEDDSPENHEGDNLWSYK</sequence>
<organism>
    <name type="scientific">Arabidopsis thaliana</name>
    <name type="common">Mouse-ear cress</name>
    <dbReference type="NCBI Taxonomy" id="3702"/>
    <lineage>
        <taxon>Eukaryota</taxon>
        <taxon>Viridiplantae</taxon>
        <taxon>Streptophyta</taxon>
        <taxon>Embryophyta</taxon>
        <taxon>Tracheophyta</taxon>
        <taxon>Spermatophyta</taxon>
        <taxon>Magnoliopsida</taxon>
        <taxon>eudicotyledons</taxon>
        <taxon>Gunneridae</taxon>
        <taxon>Pentapetalae</taxon>
        <taxon>rosids</taxon>
        <taxon>malvids</taxon>
        <taxon>Brassicales</taxon>
        <taxon>Brassicaceae</taxon>
        <taxon>Camelineae</taxon>
        <taxon>Arabidopsis</taxon>
    </lineage>
</organism>
<comment type="function">
    <text evidence="1">Probably acts as a transcriptional activator. Binds to the GCC-box pathogenesis-related promoter element. May be involved in the regulation of gene expression by stress factors and by components of stress signal transduction pathways (By similarity).</text>
</comment>
<comment type="subcellular location">
    <subcellularLocation>
        <location evidence="4">Nucleus</location>
    </subcellularLocation>
</comment>
<comment type="similarity">
    <text evidence="4">Belongs to the AP2/ERF transcription factor family. ERF subfamily.</text>
</comment>
<keyword id="KW-0010">Activator</keyword>
<keyword id="KW-0238">DNA-binding</keyword>
<keyword id="KW-0936">Ethylene signaling pathway</keyword>
<keyword id="KW-0539">Nucleus</keyword>
<keyword id="KW-1185">Reference proteome</keyword>
<keyword id="KW-0804">Transcription</keyword>
<keyword id="KW-0805">Transcription regulation</keyword>
<reference key="1">
    <citation type="journal article" date="1998" name="DNA Res.">
        <title>Structural analysis of Arabidopsis thaliana chromosome 5. VII. Sequence features of the regions of 1,013,767 bp covered by sixteen physically assigned P1 and TAC clones.</title>
        <authorList>
            <person name="Nakamura Y."/>
            <person name="Sato S."/>
            <person name="Asamizu E."/>
            <person name="Kaneko T."/>
            <person name="Kotani H."/>
            <person name="Miyajima N."/>
            <person name="Tabata S."/>
        </authorList>
    </citation>
    <scope>NUCLEOTIDE SEQUENCE [LARGE SCALE GENOMIC DNA]</scope>
    <source>
        <strain>cv. Columbia</strain>
    </source>
</reference>
<reference key="2">
    <citation type="journal article" date="2017" name="Plant J.">
        <title>Araport11: a complete reannotation of the Arabidopsis thaliana reference genome.</title>
        <authorList>
            <person name="Cheng C.Y."/>
            <person name="Krishnakumar V."/>
            <person name="Chan A.P."/>
            <person name="Thibaud-Nissen F."/>
            <person name="Schobel S."/>
            <person name="Town C.D."/>
        </authorList>
    </citation>
    <scope>GENOME REANNOTATION</scope>
    <source>
        <strain>cv. Columbia</strain>
    </source>
</reference>
<reference key="3">
    <citation type="submission" date="2004-09" db="EMBL/GenBank/DDBJ databases">
        <title>Large-scale analysis of RIKEN Arabidopsis full-length (RAFL) cDNAs.</title>
        <authorList>
            <person name="Totoki Y."/>
            <person name="Seki M."/>
            <person name="Ishida J."/>
            <person name="Nakajima M."/>
            <person name="Enju A."/>
            <person name="Kamiya A."/>
            <person name="Narusaka M."/>
            <person name="Shin-i T."/>
            <person name="Nakagawa M."/>
            <person name="Sakamoto N."/>
            <person name="Oishi K."/>
            <person name="Kohara Y."/>
            <person name="Kobayashi M."/>
            <person name="Toyoda A."/>
            <person name="Sakaki Y."/>
            <person name="Sakurai T."/>
            <person name="Iida K."/>
            <person name="Akiyama K."/>
            <person name="Satou M."/>
            <person name="Toyoda T."/>
            <person name="Konagaya A."/>
            <person name="Carninci P."/>
            <person name="Kawai J."/>
            <person name="Hayashizaki Y."/>
            <person name="Shinozaki K."/>
        </authorList>
    </citation>
    <scope>NUCLEOTIDE SEQUENCE [LARGE SCALE MRNA]</scope>
    <source>
        <strain>cv. Columbia</strain>
    </source>
</reference>
<reference key="4">
    <citation type="submission" date="2002-03" db="EMBL/GenBank/DDBJ databases">
        <title>Full-length cDNA from Arabidopsis thaliana.</title>
        <authorList>
            <person name="Brover V.V."/>
            <person name="Troukhan M.E."/>
            <person name="Alexandrov N.A."/>
            <person name="Lu Y.-P."/>
            <person name="Flavell R.B."/>
            <person name="Feldmann K.A."/>
        </authorList>
    </citation>
    <scope>NUCLEOTIDE SEQUENCE [LARGE SCALE MRNA]</scope>
</reference>
<reference key="5">
    <citation type="journal article" date="2006" name="Plant Physiol.">
        <title>Genome-wide analysis of the ERF gene family in Arabidopsis and rice.</title>
        <authorList>
            <person name="Nakano T."/>
            <person name="Suzuki K."/>
            <person name="Fujimura T."/>
            <person name="Shinshi H."/>
        </authorList>
    </citation>
    <scope>GENE FAMILY</scope>
    <scope>NOMENCLATURE</scope>
</reference>
<feature type="chain" id="PRO_0000290385" description="Ethylene-responsive transcription factor ERF025">
    <location>
        <begin position="1"/>
        <end position="232"/>
    </location>
</feature>
<feature type="DNA-binding region" description="AP2/ERF" evidence="2">
    <location>
        <begin position="64"/>
        <end position="120"/>
    </location>
</feature>
<feature type="region of interest" description="Disordered" evidence="3">
    <location>
        <begin position="1"/>
        <end position="63"/>
    </location>
</feature>
<feature type="region of interest" description="Disordered" evidence="3">
    <location>
        <begin position="213"/>
        <end position="232"/>
    </location>
</feature>
<feature type="compositionally biased region" description="Polar residues" evidence="3">
    <location>
        <begin position="1"/>
        <end position="29"/>
    </location>
</feature>
<feature type="compositionally biased region" description="Low complexity" evidence="3">
    <location>
        <begin position="30"/>
        <end position="50"/>
    </location>
</feature>
<gene>
    <name type="primary">ERF025</name>
    <name type="ordered locus">At5g52020</name>
    <name type="ORF">MSG15.10</name>
</gene>
<protein>
    <recommendedName>
        <fullName>Ethylene-responsive transcription factor ERF025</fullName>
    </recommendedName>
</protein>
<name>ERF25_ARATH</name>
<accession>Q9FJ90</accession>
<dbReference type="EMBL" id="AB015478">
    <property type="protein sequence ID" value="BAB11050.1"/>
    <property type="molecule type" value="Genomic_DNA"/>
</dbReference>
<dbReference type="EMBL" id="CP002688">
    <property type="protein sequence ID" value="AED96159.1"/>
    <property type="molecule type" value="Genomic_DNA"/>
</dbReference>
<dbReference type="EMBL" id="AK176464">
    <property type="protein sequence ID" value="BAD44227.1"/>
    <property type="molecule type" value="mRNA"/>
</dbReference>
<dbReference type="EMBL" id="AY086443">
    <property type="protein sequence ID" value="AAM63446.1"/>
    <property type="molecule type" value="mRNA"/>
</dbReference>
<dbReference type="RefSeq" id="NP_200015.1">
    <property type="nucleotide sequence ID" value="NM_124581.3"/>
</dbReference>
<dbReference type="SMR" id="Q9FJ90"/>
<dbReference type="BioGRID" id="20522">
    <property type="interactions" value="5"/>
</dbReference>
<dbReference type="FunCoup" id="Q9FJ90">
    <property type="interactions" value="15"/>
</dbReference>
<dbReference type="IntAct" id="Q9FJ90">
    <property type="interactions" value="2"/>
</dbReference>
<dbReference type="STRING" id="3702.Q9FJ90"/>
<dbReference type="iPTMnet" id="Q9FJ90"/>
<dbReference type="PaxDb" id="3702-AT5G52020.1"/>
<dbReference type="ProteomicsDB" id="220563"/>
<dbReference type="EnsemblPlants" id="AT5G52020.1">
    <property type="protein sequence ID" value="AT5G52020.1"/>
    <property type="gene ID" value="AT5G52020"/>
</dbReference>
<dbReference type="GeneID" id="835277"/>
<dbReference type="Gramene" id="AT5G52020.1">
    <property type="protein sequence ID" value="AT5G52020.1"/>
    <property type="gene ID" value="AT5G52020"/>
</dbReference>
<dbReference type="KEGG" id="ath:AT5G52020"/>
<dbReference type="Araport" id="AT5G52020"/>
<dbReference type="TAIR" id="AT5G52020"/>
<dbReference type="eggNOG" id="ENOG502RZJ7">
    <property type="taxonomic scope" value="Eukaryota"/>
</dbReference>
<dbReference type="HOGENOM" id="CLU_063331_1_1_1"/>
<dbReference type="InParanoid" id="Q9FJ90"/>
<dbReference type="OMA" id="ENHEGDN"/>
<dbReference type="OrthoDB" id="1932364at2759"/>
<dbReference type="PhylomeDB" id="Q9FJ90"/>
<dbReference type="PRO" id="PR:Q9FJ90"/>
<dbReference type="Proteomes" id="UP000006548">
    <property type="component" value="Chromosome 5"/>
</dbReference>
<dbReference type="ExpressionAtlas" id="Q9FJ90">
    <property type="expression patterns" value="baseline and differential"/>
</dbReference>
<dbReference type="GO" id="GO:0005634">
    <property type="term" value="C:nucleus"/>
    <property type="evidence" value="ECO:0007669"/>
    <property type="project" value="UniProtKB-SubCell"/>
</dbReference>
<dbReference type="GO" id="GO:0003700">
    <property type="term" value="F:DNA-binding transcription factor activity"/>
    <property type="evidence" value="ECO:0000250"/>
    <property type="project" value="TAIR"/>
</dbReference>
<dbReference type="GO" id="GO:0000976">
    <property type="term" value="F:transcription cis-regulatory region binding"/>
    <property type="evidence" value="ECO:0000353"/>
    <property type="project" value="TAIR"/>
</dbReference>
<dbReference type="GO" id="GO:0050832">
    <property type="term" value="P:defense response to fungus"/>
    <property type="evidence" value="ECO:0000270"/>
    <property type="project" value="TAIR"/>
</dbReference>
<dbReference type="GO" id="GO:0009873">
    <property type="term" value="P:ethylene-activated signaling pathway"/>
    <property type="evidence" value="ECO:0007669"/>
    <property type="project" value="UniProtKB-KW"/>
</dbReference>
<dbReference type="GO" id="GO:0019760">
    <property type="term" value="P:glucosinolate metabolic process"/>
    <property type="evidence" value="ECO:0000315"/>
    <property type="project" value="TAIR"/>
</dbReference>
<dbReference type="CDD" id="cd00018">
    <property type="entry name" value="AP2"/>
    <property type="match status" value="1"/>
</dbReference>
<dbReference type="Gene3D" id="3.30.730.10">
    <property type="entry name" value="AP2/ERF domain"/>
    <property type="match status" value="1"/>
</dbReference>
<dbReference type="InterPro" id="IPR001471">
    <property type="entry name" value="AP2/ERF_dom"/>
</dbReference>
<dbReference type="InterPro" id="IPR036955">
    <property type="entry name" value="AP2/ERF_dom_sf"/>
</dbReference>
<dbReference type="InterPro" id="IPR016177">
    <property type="entry name" value="DNA-bd_dom_sf"/>
</dbReference>
<dbReference type="InterPro" id="IPR045277">
    <property type="entry name" value="DRE1A-I"/>
</dbReference>
<dbReference type="PANTHER" id="PTHR31839:SF85">
    <property type="entry name" value="AP2_ERF DOMAIN-CONTAINING PROTEIN"/>
    <property type="match status" value="1"/>
</dbReference>
<dbReference type="PANTHER" id="PTHR31839">
    <property type="entry name" value="DEHYDRATION-RESPONSIVE ELEMENT-BINDING PROTEIN 1D"/>
    <property type="match status" value="1"/>
</dbReference>
<dbReference type="Pfam" id="PF00847">
    <property type="entry name" value="AP2"/>
    <property type="match status" value="1"/>
</dbReference>
<dbReference type="PRINTS" id="PR00367">
    <property type="entry name" value="ETHRSPELEMNT"/>
</dbReference>
<dbReference type="SMART" id="SM00380">
    <property type="entry name" value="AP2"/>
    <property type="match status" value="1"/>
</dbReference>
<dbReference type="SUPFAM" id="SSF54171">
    <property type="entry name" value="DNA-binding domain"/>
    <property type="match status" value="1"/>
</dbReference>
<dbReference type="PROSITE" id="PS51032">
    <property type="entry name" value="AP2_ERF"/>
    <property type="match status" value="1"/>
</dbReference>
<proteinExistence type="evidence at transcript level"/>
<evidence type="ECO:0000250" key="1"/>
<evidence type="ECO:0000255" key="2">
    <source>
        <dbReference type="PROSITE-ProRule" id="PRU00366"/>
    </source>
</evidence>
<evidence type="ECO:0000256" key="3">
    <source>
        <dbReference type="SAM" id="MobiDB-lite"/>
    </source>
</evidence>
<evidence type="ECO:0000305" key="4"/>